<dbReference type="EMBL" id="CP000036">
    <property type="protein sequence ID" value="ABB68721.1"/>
    <property type="molecule type" value="Genomic_DNA"/>
</dbReference>
<dbReference type="RefSeq" id="WP_000208752.1">
    <property type="nucleotide sequence ID" value="NC_007613.1"/>
</dbReference>
<dbReference type="SMR" id="Q31T87"/>
<dbReference type="KEGG" id="sbo:SBO_4304"/>
<dbReference type="HOGENOM" id="CLU_156492_0_0_6"/>
<dbReference type="Proteomes" id="UP000007067">
    <property type="component" value="Chromosome"/>
</dbReference>
<dbReference type="GO" id="GO:0045283">
    <property type="term" value="C:fumarate reductase complex"/>
    <property type="evidence" value="ECO:0007669"/>
    <property type="project" value="UniProtKB-UniRule"/>
</dbReference>
<dbReference type="GO" id="GO:0005886">
    <property type="term" value="C:plasma membrane"/>
    <property type="evidence" value="ECO:0007669"/>
    <property type="project" value="UniProtKB-SubCell"/>
</dbReference>
<dbReference type="GO" id="GO:0000104">
    <property type="term" value="F:succinate dehydrogenase activity"/>
    <property type="evidence" value="ECO:0007669"/>
    <property type="project" value="UniProtKB-UniRule"/>
</dbReference>
<dbReference type="CDD" id="cd00546">
    <property type="entry name" value="QFR_TypeD_subunitC"/>
    <property type="match status" value="1"/>
</dbReference>
<dbReference type="FunFam" id="1.20.1300.10:FF:000003">
    <property type="entry name" value="Fumarate reductase subunit C"/>
    <property type="match status" value="1"/>
</dbReference>
<dbReference type="Gene3D" id="1.20.1300.10">
    <property type="entry name" value="Fumarate reductase/succinate dehydrogenase, transmembrane subunit"/>
    <property type="match status" value="1"/>
</dbReference>
<dbReference type="HAMAP" id="MF_00708">
    <property type="entry name" value="Fumarate_red_C"/>
    <property type="match status" value="1"/>
</dbReference>
<dbReference type="InterPro" id="IPR003510">
    <property type="entry name" value="Fumarate_red_C"/>
</dbReference>
<dbReference type="InterPro" id="IPR034804">
    <property type="entry name" value="SQR/QFR_C/D"/>
</dbReference>
<dbReference type="NCBIfam" id="NF003445">
    <property type="entry name" value="PRK04987.1"/>
    <property type="match status" value="1"/>
</dbReference>
<dbReference type="Pfam" id="PF02300">
    <property type="entry name" value="Fumarate_red_C"/>
    <property type="match status" value="1"/>
</dbReference>
<dbReference type="PIRSF" id="PIRSF000180">
    <property type="entry name" value="FrdC"/>
    <property type="match status" value="1"/>
</dbReference>
<dbReference type="SUPFAM" id="SSF81343">
    <property type="entry name" value="Fumarate reductase respiratory complex transmembrane subunits"/>
    <property type="match status" value="1"/>
</dbReference>
<sequence length="131" mass="15001">MTTKRKPYVRPMTSTWWKKLPFYRFYMLREGTAVPAVWFSIELIFGLFALKNGPDAWAGFVDFLQNPVIVIINLITLAAALLHTKTWFELAPKAANIIVKDEKMGPEPIIKSLWAVTVVATIVILFVALYW</sequence>
<reference key="1">
    <citation type="journal article" date="2005" name="Nucleic Acids Res.">
        <title>Genome dynamics and diversity of Shigella species, the etiologic agents of bacillary dysentery.</title>
        <authorList>
            <person name="Yang F."/>
            <person name="Yang J."/>
            <person name="Zhang X."/>
            <person name="Chen L."/>
            <person name="Jiang Y."/>
            <person name="Yan Y."/>
            <person name="Tang X."/>
            <person name="Wang J."/>
            <person name="Xiong Z."/>
            <person name="Dong J."/>
            <person name="Xue Y."/>
            <person name="Zhu Y."/>
            <person name="Xu X."/>
            <person name="Sun L."/>
            <person name="Chen S."/>
            <person name="Nie H."/>
            <person name="Peng J."/>
            <person name="Xu J."/>
            <person name="Wang Y."/>
            <person name="Yuan Z."/>
            <person name="Wen Y."/>
            <person name="Yao Z."/>
            <person name="Shen Y."/>
            <person name="Qiang B."/>
            <person name="Hou Y."/>
            <person name="Yu J."/>
            <person name="Jin Q."/>
        </authorList>
    </citation>
    <scope>NUCLEOTIDE SEQUENCE [LARGE SCALE GENOMIC DNA]</scope>
    <source>
        <strain>Sb227</strain>
    </source>
</reference>
<feature type="chain" id="PRO_1000045532" description="Fumarate reductase subunit C">
    <location>
        <begin position="1"/>
        <end position="131"/>
    </location>
</feature>
<feature type="transmembrane region" description="Helical" evidence="1">
    <location>
        <begin position="30"/>
        <end position="50"/>
    </location>
</feature>
<feature type="transmembrane region" description="Helical" evidence="1">
    <location>
        <begin position="63"/>
        <end position="83"/>
    </location>
</feature>
<feature type="transmembrane region" description="Helical" evidence="1">
    <location>
        <begin position="109"/>
        <end position="129"/>
    </location>
</feature>
<protein>
    <recommendedName>
        <fullName evidence="1">Fumarate reductase subunit C</fullName>
    </recommendedName>
    <alternativeName>
        <fullName evidence="1">Fumarate reductase 15 kDa hydrophobic protein</fullName>
    </alternativeName>
    <alternativeName>
        <fullName evidence="1">Quinol-fumarate reductase subunit C</fullName>
        <shortName evidence="1">QFR subunit C</shortName>
    </alternativeName>
</protein>
<keyword id="KW-0997">Cell inner membrane</keyword>
<keyword id="KW-1003">Cell membrane</keyword>
<keyword id="KW-0472">Membrane</keyword>
<keyword id="KW-0812">Transmembrane</keyword>
<keyword id="KW-1133">Transmembrane helix</keyword>
<accession>Q31T87</accession>
<name>FRDC_SHIBS</name>
<gene>
    <name evidence="1" type="primary">frdC</name>
    <name type="ordered locus">SBO_4304</name>
</gene>
<comment type="function">
    <text evidence="1">Two distinct, membrane-bound, FAD-containing enzymes are responsible for the catalysis of fumarate and succinate interconversion; fumarate reductase is used in anaerobic growth, and succinate dehydrogenase is used in aerobic growth. Anchors the catalytic components of the fumarate reductase complex to the cell inner membrane, binds quinones.</text>
</comment>
<comment type="subunit">
    <text evidence="1">Part of an enzyme complex containing four subunits: a flavoprotein (FrdA), an iron-sulfur protein (FrdB), and two hydrophobic anchor proteins (FrdC and FrdD).</text>
</comment>
<comment type="subcellular location">
    <subcellularLocation>
        <location evidence="1">Cell inner membrane</location>
        <topology evidence="1">Multi-pass membrane protein</topology>
    </subcellularLocation>
</comment>
<comment type="similarity">
    <text evidence="1">Belongs to the FrdC family.</text>
</comment>
<organism>
    <name type="scientific">Shigella boydii serotype 4 (strain Sb227)</name>
    <dbReference type="NCBI Taxonomy" id="300268"/>
    <lineage>
        <taxon>Bacteria</taxon>
        <taxon>Pseudomonadati</taxon>
        <taxon>Pseudomonadota</taxon>
        <taxon>Gammaproteobacteria</taxon>
        <taxon>Enterobacterales</taxon>
        <taxon>Enterobacteriaceae</taxon>
        <taxon>Shigella</taxon>
    </lineage>
</organism>
<proteinExistence type="inferred from homology"/>
<evidence type="ECO:0000255" key="1">
    <source>
        <dbReference type="HAMAP-Rule" id="MF_00708"/>
    </source>
</evidence>